<accession>Q87PB0</accession>
<evidence type="ECO:0000255" key="1">
    <source>
        <dbReference type="HAMAP-Rule" id="MF_00749"/>
    </source>
</evidence>
<evidence type="ECO:0000256" key="2">
    <source>
        <dbReference type="SAM" id="MobiDB-lite"/>
    </source>
</evidence>
<reference key="1">
    <citation type="journal article" date="2003" name="Lancet">
        <title>Genome sequence of Vibrio parahaemolyticus: a pathogenic mechanism distinct from that of V. cholerae.</title>
        <authorList>
            <person name="Makino K."/>
            <person name="Oshima K."/>
            <person name="Kurokawa K."/>
            <person name="Yokoyama K."/>
            <person name="Uda T."/>
            <person name="Tagomori K."/>
            <person name="Iijima Y."/>
            <person name="Najima M."/>
            <person name="Nakano M."/>
            <person name="Yamashita A."/>
            <person name="Kubota Y."/>
            <person name="Kimura S."/>
            <person name="Yasunaga T."/>
            <person name="Honda T."/>
            <person name="Shinagawa H."/>
            <person name="Hattori M."/>
            <person name="Iida T."/>
        </authorList>
    </citation>
    <scope>NUCLEOTIDE SEQUENCE [LARGE SCALE GENOMIC DNA]</scope>
    <source>
        <strain>RIMD 2210633</strain>
    </source>
</reference>
<name>PROQ_VIBPA</name>
<organism>
    <name type="scientific">Vibrio parahaemolyticus serotype O3:K6 (strain RIMD 2210633)</name>
    <dbReference type="NCBI Taxonomy" id="223926"/>
    <lineage>
        <taxon>Bacteria</taxon>
        <taxon>Pseudomonadati</taxon>
        <taxon>Pseudomonadota</taxon>
        <taxon>Gammaproteobacteria</taxon>
        <taxon>Vibrionales</taxon>
        <taxon>Vibrionaceae</taxon>
        <taxon>Vibrio</taxon>
    </lineage>
</organism>
<sequence>MTEKLKNSKEVIAYIAECFPKCFTLEGEAKPLKIGIFQDLAERLNEDEKVSKTQLRAALRQYTSSWRYLHGVKPGAVRVDLDGNPCGELEEEHVEHAKATLAESKAKVQARRKEQAQKAREEGKAKAKPAANKKPQQPRRTNKPKVQKPTKPVETRALNADEITVGNAVNVNMGKGNMAATIVEINKDDVRVQLANGLQMVVKAEHLRA</sequence>
<keyword id="KW-0143">Chaperone</keyword>
<keyword id="KW-0963">Cytoplasm</keyword>
<keyword id="KW-0694">RNA-binding</keyword>
<protein>
    <recommendedName>
        <fullName evidence="1">RNA chaperone ProQ</fullName>
    </recommendedName>
</protein>
<proteinExistence type="inferred from homology"/>
<comment type="function">
    <text evidence="1">RNA chaperone with significant RNA binding, RNA strand exchange and RNA duplexing activities.</text>
</comment>
<comment type="subcellular location">
    <subcellularLocation>
        <location evidence="1">Cytoplasm</location>
    </subcellularLocation>
</comment>
<comment type="similarity">
    <text evidence="1">Belongs to the ProQ family.</text>
</comment>
<dbReference type="EMBL" id="BA000031">
    <property type="protein sequence ID" value="BAC59870.1"/>
    <property type="molecule type" value="Genomic_DNA"/>
</dbReference>
<dbReference type="RefSeq" id="NP_797986.1">
    <property type="nucleotide sequence ID" value="NC_004603.1"/>
</dbReference>
<dbReference type="RefSeq" id="WP_005458274.1">
    <property type="nucleotide sequence ID" value="NC_004603.1"/>
</dbReference>
<dbReference type="SMR" id="Q87PB0"/>
<dbReference type="GeneID" id="1189114"/>
<dbReference type="KEGG" id="vpa:VP1607"/>
<dbReference type="PATRIC" id="fig|223926.6.peg.1530"/>
<dbReference type="eggNOG" id="COG3109">
    <property type="taxonomic scope" value="Bacteria"/>
</dbReference>
<dbReference type="HOGENOM" id="CLU_113254_0_0_6"/>
<dbReference type="Proteomes" id="UP000002493">
    <property type="component" value="Chromosome 1"/>
</dbReference>
<dbReference type="GO" id="GO:0005829">
    <property type="term" value="C:cytosol"/>
    <property type="evidence" value="ECO:0007669"/>
    <property type="project" value="TreeGrafter"/>
</dbReference>
<dbReference type="GO" id="GO:0033592">
    <property type="term" value="F:RNA strand annealing activity"/>
    <property type="evidence" value="ECO:0007669"/>
    <property type="project" value="UniProtKB-UniRule"/>
</dbReference>
<dbReference type="GO" id="GO:0034057">
    <property type="term" value="F:RNA strand-exchange activity"/>
    <property type="evidence" value="ECO:0007669"/>
    <property type="project" value="UniProtKB-UniRule"/>
</dbReference>
<dbReference type="GO" id="GO:0010608">
    <property type="term" value="P:post-transcriptional regulation of gene expression"/>
    <property type="evidence" value="ECO:0007669"/>
    <property type="project" value="InterPro"/>
</dbReference>
<dbReference type="FunFam" id="1.10.1710.10:FF:000001">
    <property type="entry name" value="RNA chaperone ProQ"/>
    <property type="match status" value="1"/>
</dbReference>
<dbReference type="Gene3D" id="1.10.1710.10">
    <property type="entry name" value="ProQ/FinO domain"/>
    <property type="match status" value="1"/>
</dbReference>
<dbReference type="HAMAP" id="MF_00749">
    <property type="entry name" value="ProQ"/>
    <property type="match status" value="1"/>
</dbReference>
<dbReference type="InterPro" id="IPR023529">
    <property type="entry name" value="ProQ"/>
</dbReference>
<dbReference type="InterPro" id="IPR016103">
    <property type="entry name" value="ProQ/FinO"/>
</dbReference>
<dbReference type="InterPro" id="IPR036442">
    <property type="entry name" value="ProQ/FinO_sf"/>
</dbReference>
<dbReference type="InterPro" id="IPR035236">
    <property type="entry name" value="ProQ_C"/>
</dbReference>
<dbReference type="NCBIfam" id="NF003434">
    <property type="entry name" value="PRK04950.1"/>
    <property type="match status" value="1"/>
</dbReference>
<dbReference type="PANTHER" id="PTHR38106">
    <property type="entry name" value="RNA CHAPERONE PROQ"/>
    <property type="match status" value="1"/>
</dbReference>
<dbReference type="PANTHER" id="PTHR38106:SF1">
    <property type="entry name" value="RNA CHAPERONE PROQ"/>
    <property type="match status" value="1"/>
</dbReference>
<dbReference type="Pfam" id="PF04352">
    <property type="entry name" value="ProQ"/>
    <property type="match status" value="1"/>
</dbReference>
<dbReference type="Pfam" id="PF17516">
    <property type="entry name" value="ProQ_C"/>
    <property type="match status" value="1"/>
</dbReference>
<dbReference type="SMART" id="SM00945">
    <property type="entry name" value="ProQ"/>
    <property type="match status" value="1"/>
</dbReference>
<dbReference type="SUPFAM" id="SSF48657">
    <property type="entry name" value="FinO-like"/>
    <property type="match status" value="1"/>
</dbReference>
<feature type="chain" id="PRO_0000214626" description="RNA chaperone ProQ">
    <location>
        <begin position="1"/>
        <end position="209"/>
    </location>
</feature>
<feature type="region of interest" description="Disordered" evidence="2">
    <location>
        <begin position="101"/>
        <end position="155"/>
    </location>
</feature>
<feature type="compositionally biased region" description="Basic and acidic residues" evidence="2">
    <location>
        <begin position="111"/>
        <end position="125"/>
    </location>
</feature>
<feature type="compositionally biased region" description="Basic residues" evidence="2">
    <location>
        <begin position="136"/>
        <end position="148"/>
    </location>
</feature>
<gene>
    <name evidence="1" type="primary">proQ</name>
    <name type="ordered locus">VP1607</name>
</gene>